<organism>
    <name type="scientific">Shewanella sp. (strain MR-7)</name>
    <dbReference type="NCBI Taxonomy" id="60481"/>
    <lineage>
        <taxon>Bacteria</taxon>
        <taxon>Pseudomonadati</taxon>
        <taxon>Pseudomonadota</taxon>
        <taxon>Gammaproteobacteria</taxon>
        <taxon>Alteromonadales</taxon>
        <taxon>Shewanellaceae</taxon>
        <taxon>Shewanella</taxon>
    </lineage>
</organism>
<reference key="1">
    <citation type="submission" date="2006-08" db="EMBL/GenBank/DDBJ databases">
        <title>Complete sequence of chromosome 1 of Shewanella sp. MR-7.</title>
        <authorList>
            <person name="Copeland A."/>
            <person name="Lucas S."/>
            <person name="Lapidus A."/>
            <person name="Barry K."/>
            <person name="Detter J.C."/>
            <person name="Glavina del Rio T."/>
            <person name="Hammon N."/>
            <person name="Israni S."/>
            <person name="Dalin E."/>
            <person name="Tice H."/>
            <person name="Pitluck S."/>
            <person name="Kiss H."/>
            <person name="Brettin T."/>
            <person name="Bruce D."/>
            <person name="Han C."/>
            <person name="Tapia R."/>
            <person name="Gilna P."/>
            <person name="Schmutz J."/>
            <person name="Larimer F."/>
            <person name="Land M."/>
            <person name="Hauser L."/>
            <person name="Kyrpides N."/>
            <person name="Mikhailova N."/>
            <person name="Nealson K."/>
            <person name="Konstantinidis K."/>
            <person name="Klappenbach J."/>
            <person name="Tiedje J."/>
            <person name="Richardson P."/>
        </authorList>
    </citation>
    <scope>NUCLEOTIDE SEQUENCE [LARGE SCALE GENOMIC DNA]</scope>
    <source>
        <strain>MR-7</strain>
    </source>
</reference>
<keyword id="KW-0378">Hydrolase</keyword>
<gene>
    <name evidence="1" type="primary">glsA</name>
    <name type="ordered locus">Shewmr7_1254</name>
</gene>
<proteinExistence type="inferred from homology"/>
<protein>
    <recommendedName>
        <fullName evidence="1">Glutaminase</fullName>
        <ecNumber evidence="1">3.5.1.2</ecNumber>
    </recommendedName>
</protein>
<accession>Q0HXA2</accession>
<evidence type="ECO:0000255" key="1">
    <source>
        <dbReference type="HAMAP-Rule" id="MF_00313"/>
    </source>
</evidence>
<feature type="chain" id="PRO_1000048362" description="Glutaminase">
    <location>
        <begin position="1"/>
        <end position="304"/>
    </location>
</feature>
<feature type="binding site" evidence="1">
    <location>
        <position position="63"/>
    </location>
    <ligand>
        <name>substrate</name>
    </ligand>
</feature>
<feature type="binding site" evidence="1">
    <location>
        <position position="114"/>
    </location>
    <ligand>
        <name>substrate</name>
    </ligand>
</feature>
<feature type="binding site" evidence="1">
    <location>
        <position position="158"/>
    </location>
    <ligand>
        <name>substrate</name>
    </ligand>
</feature>
<feature type="binding site" evidence="1">
    <location>
        <position position="165"/>
    </location>
    <ligand>
        <name>substrate</name>
    </ligand>
</feature>
<feature type="binding site" evidence="1">
    <location>
        <position position="189"/>
    </location>
    <ligand>
        <name>substrate</name>
    </ligand>
</feature>
<feature type="binding site" evidence="1">
    <location>
        <position position="240"/>
    </location>
    <ligand>
        <name>substrate</name>
    </ligand>
</feature>
<feature type="binding site" evidence="1">
    <location>
        <position position="258"/>
    </location>
    <ligand>
        <name>substrate</name>
    </ligand>
</feature>
<dbReference type="EC" id="3.5.1.2" evidence="1"/>
<dbReference type="EMBL" id="CP000444">
    <property type="protein sequence ID" value="ABI42253.1"/>
    <property type="molecule type" value="Genomic_DNA"/>
</dbReference>
<dbReference type="SMR" id="Q0HXA2"/>
<dbReference type="KEGG" id="shm:Shewmr7_1254"/>
<dbReference type="HOGENOM" id="CLU_027932_1_1_6"/>
<dbReference type="GO" id="GO:0004359">
    <property type="term" value="F:glutaminase activity"/>
    <property type="evidence" value="ECO:0007669"/>
    <property type="project" value="UniProtKB-UniRule"/>
</dbReference>
<dbReference type="GO" id="GO:0006537">
    <property type="term" value="P:glutamate biosynthetic process"/>
    <property type="evidence" value="ECO:0007669"/>
    <property type="project" value="TreeGrafter"/>
</dbReference>
<dbReference type="GO" id="GO:0006543">
    <property type="term" value="P:glutamine catabolic process"/>
    <property type="evidence" value="ECO:0007669"/>
    <property type="project" value="TreeGrafter"/>
</dbReference>
<dbReference type="FunFam" id="3.40.710.10:FF:000005">
    <property type="entry name" value="Glutaminase"/>
    <property type="match status" value="1"/>
</dbReference>
<dbReference type="Gene3D" id="3.40.710.10">
    <property type="entry name" value="DD-peptidase/beta-lactamase superfamily"/>
    <property type="match status" value="1"/>
</dbReference>
<dbReference type="HAMAP" id="MF_00313">
    <property type="entry name" value="Glutaminase"/>
    <property type="match status" value="1"/>
</dbReference>
<dbReference type="InterPro" id="IPR012338">
    <property type="entry name" value="Beta-lactam/transpept-like"/>
</dbReference>
<dbReference type="InterPro" id="IPR015868">
    <property type="entry name" value="Glutaminase"/>
</dbReference>
<dbReference type="NCBIfam" id="TIGR03814">
    <property type="entry name" value="Gln_ase"/>
    <property type="match status" value="1"/>
</dbReference>
<dbReference type="NCBIfam" id="NF002132">
    <property type="entry name" value="PRK00971.1-1"/>
    <property type="match status" value="1"/>
</dbReference>
<dbReference type="NCBIfam" id="NF002133">
    <property type="entry name" value="PRK00971.1-2"/>
    <property type="match status" value="1"/>
</dbReference>
<dbReference type="PANTHER" id="PTHR12544">
    <property type="entry name" value="GLUTAMINASE"/>
    <property type="match status" value="1"/>
</dbReference>
<dbReference type="PANTHER" id="PTHR12544:SF29">
    <property type="entry name" value="GLUTAMINASE"/>
    <property type="match status" value="1"/>
</dbReference>
<dbReference type="Pfam" id="PF04960">
    <property type="entry name" value="Glutaminase"/>
    <property type="match status" value="1"/>
</dbReference>
<dbReference type="SUPFAM" id="SSF56601">
    <property type="entry name" value="beta-lactamase/transpeptidase-like"/>
    <property type="match status" value="1"/>
</dbReference>
<comment type="catalytic activity">
    <reaction evidence="1">
        <text>L-glutamine + H2O = L-glutamate + NH4(+)</text>
        <dbReference type="Rhea" id="RHEA:15889"/>
        <dbReference type="ChEBI" id="CHEBI:15377"/>
        <dbReference type="ChEBI" id="CHEBI:28938"/>
        <dbReference type="ChEBI" id="CHEBI:29985"/>
        <dbReference type="ChEBI" id="CHEBI:58359"/>
        <dbReference type="EC" id="3.5.1.2"/>
    </reaction>
</comment>
<comment type="subunit">
    <text evidence="1">Homotetramer.</text>
</comment>
<comment type="similarity">
    <text evidence="1">Belongs to the glutaminase family.</text>
</comment>
<name>GLSA_SHESR</name>
<sequence>MPEQALLEEVVDKVRPLLGQGKVANYIPALANVDAGKLGIAVTTIDGETIGAGDYLEPFSIQSISKVFSLTLALTLYEETEIWSRVGKEPSGHSFNSLVQVELERGKPRNPFINAGALVIADLLQSRLGAPKHRMLELVRALSQNDKVCFDKQVADSEYQHSARNAAIAYLMKSFGNFQGDVDTVLRTYFHYCALKMNCADLSRAMLYLANRGKTLDGTELISQVQTRQLNALLATSGLYDGAGEFAYRVGMPGKSGVGGGIIAVIPGELSVCVWSPELDNQGNSLAGTAMLEHLSQRLGRSIF</sequence>